<protein>
    <recommendedName>
        <fullName evidence="4">Gas vesicle protein F</fullName>
    </recommendedName>
</protein>
<organism>
    <name type="scientific">Streptomyces sp. (strain CB03234)</name>
    <dbReference type="NCBI Taxonomy" id="1703937"/>
    <lineage>
        <taxon>Bacteria</taxon>
        <taxon>Bacillati</taxon>
        <taxon>Actinomycetota</taxon>
        <taxon>Actinomycetes</taxon>
        <taxon>Kitasatosporales</taxon>
        <taxon>Streptomycetaceae</taxon>
        <taxon>Streptomyces</taxon>
    </lineage>
</organism>
<proteinExistence type="evidence at transcript level"/>
<comment type="function">
    <text evidence="2 5">A minor component of the gas vesicle, may be involved in preventing GvpA aggregation during gas vesicle nucleation (By similarity). Gas vesicles are hollow, gas filled proteinaceous nanostructures found in some microorganisms. It is not clear what function gas vesicles perform in soil bacteria (Probable).</text>
</comment>
<comment type="subunit">
    <text evidence="2">Binds GvpA.</text>
</comment>
<comment type="subcellular location">
    <subcellularLocation>
        <location evidence="2">Gas vesicle</location>
    </subcellularLocation>
    <text evidence="1">Probably faces the interior of the gas vesicle.</text>
</comment>
<comment type="induction">
    <text evidence="3">Gas vesicle production is induced by growth conditions that promote production of secondary metabolites tiancimycin A and B.</text>
</comment>
<comment type="miscellaneous">
    <text evidence="3">This strain probably produces some gas vesicles from the probable gvpO-gvpA-gvpF-gvpG-gvpJ-gvpL-gvpS-gvpK operon; it can be induced to produce more under certain growth conditions.</text>
</comment>
<comment type="similarity">
    <text evidence="5">Belongs to the gas vesicle GvpF/GvpL family.</text>
</comment>
<evidence type="ECO:0000250" key="1">
    <source>
        <dbReference type="UniProtKB" id="A8Y9T3"/>
    </source>
</evidence>
<evidence type="ECO:0000250" key="2">
    <source>
        <dbReference type="UniProtKB" id="Q9HI21"/>
    </source>
</evidence>
<evidence type="ECO:0000269" key="3">
    <source>
    </source>
</evidence>
<evidence type="ECO:0000303" key="4">
    <source>
    </source>
</evidence>
<evidence type="ECO:0000305" key="5"/>
<evidence type="ECO:0000312" key="6">
    <source>
        <dbReference type="EMBL" id="OKK04377.1"/>
    </source>
</evidence>
<keyword id="KW-0304">Gas vesicle</keyword>
<keyword id="KW-1185">Reference proteome</keyword>
<name>GVPF_STRX0</name>
<sequence>MSTYVYGIARSSHPSLPEKMGGIGDPPQPVRILVQGALAALVSDAPEDLRPKRRDLMAHQNVLAEAGAGGAVLPMRFGGISPDDDAVLAVLDEREEHYLERLRALDDKVEYNVKASHDEEAVLHRVLADNPELRGLSEANRAAGGGTYEQKLALGERVAAAVQQREASDAVLIQEALQAEATDVRPGPESGAWLANISFLVERDRADGFVAAIDKLQQANHHLVLQVNGPLPPYSFVE</sequence>
<accession>A0A1Q5LR02</accession>
<dbReference type="EMBL" id="LIYH01000003">
    <property type="protein sequence ID" value="OKK04377.1"/>
    <property type="molecule type" value="Genomic_DNA"/>
</dbReference>
<dbReference type="RefSeq" id="WP_073754890.1">
    <property type="nucleotide sequence ID" value="NZ_LIYH01000003.1"/>
</dbReference>
<dbReference type="SMR" id="A0A1Q5LR02"/>
<dbReference type="STRING" id="1703937.AMK26_13470"/>
<dbReference type="OrthoDB" id="4864106at2"/>
<dbReference type="Proteomes" id="UP000186270">
    <property type="component" value="Unassembled WGS sequence"/>
</dbReference>
<dbReference type="GO" id="GO:0031411">
    <property type="term" value="C:gas vesicle"/>
    <property type="evidence" value="ECO:0007669"/>
    <property type="project" value="UniProtKB-SubCell"/>
</dbReference>
<dbReference type="GO" id="GO:0031412">
    <property type="term" value="P:gas vesicle organization"/>
    <property type="evidence" value="ECO:0007669"/>
    <property type="project" value="InterPro"/>
</dbReference>
<dbReference type="InterPro" id="IPR009430">
    <property type="entry name" value="GvpL/GvpF"/>
</dbReference>
<dbReference type="PANTHER" id="PTHR36852">
    <property type="entry name" value="PROTEIN GVPL 2"/>
    <property type="match status" value="1"/>
</dbReference>
<dbReference type="PANTHER" id="PTHR36852:SF1">
    <property type="entry name" value="PROTEIN GVPL 2"/>
    <property type="match status" value="1"/>
</dbReference>
<dbReference type="Pfam" id="PF06386">
    <property type="entry name" value="GvpL_GvpF"/>
    <property type="match status" value="1"/>
</dbReference>
<gene>
    <name evidence="4" type="primary">gvpF</name>
    <name evidence="6" type="ORF">AMK26_13470</name>
</gene>
<feature type="chain" id="PRO_0000458445" description="Gas vesicle protein F">
    <location>
        <begin position="1"/>
        <end position="238"/>
    </location>
</feature>
<reference evidence="6" key="1">
    <citation type="journal article" date="2016" name="MBio">
        <title>Strain Prioritization and Genome Mining for Enediyne Natural Products.</title>
        <authorList>
            <person name="Yan X."/>
            <person name="Ge H."/>
            <person name="Huang T."/>
            <person name="Hindra X."/>
            <person name="Yang D."/>
            <person name="Teng Q."/>
            <person name="Crnovcic I."/>
            <person name="Li X."/>
            <person name="Rudolf J.D."/>
            <person name="Lohman J.R."/>
            <person name="Gansemans Y."/>
            <person name="Zhu X."/>
            <person name="Huang Y."/>
            <person name="Zhao L.X."/>
            <person name="Jiang Y."/>
            <person name="Van Nieuwerburgh F."/>
            <person name="Rader C."/>
            <person name="Duan Y."/>
            <person name="Shen B."/>
        </authorList>
    </citation>
    <scope>NUCLEOTIDE SEQUENCE [LARGE SCALE GENOMIC DNA]</scope>
    <source>
        <strain>CB03234</strain>
    </source>
</reference>
<reference key="2">
    <citation type="journal article" date="2019" name="Appl. Microbiol. Biotechnol.">
        <title>Discovery of gas vesicles in Streptomyces sp. CB03234-S and potential effects of gas vesicle gene overexpression on morphological and metabolic changes in streptomycetes.</title>
        <authorList>
            <person name="Huang R."/>
            <person name="Lin J."/>
            <person name="Gao D."/>
            <person name="Zhang F."/>
            <person name="Yi L."/>
            <person name="Huang Y."/>
            <person name="Yan X."/>
            <person name="Duan Y."/>
            <person name="Zhu X."/>
        </authorList>
    </citation>
    <scope>INDUCTION</scope>
    <scope>PROBABLE GAS VESICLE FORMATION</scope>
    <source>
        <strain>CB03234</strain>
    </source>
</reference>